<reference key="1">
    <citation type="journal article" date="2008" name="Nature">
        <title>The virophage as a unique parasite of the giant mimivirus.</title>
        <authorList>
            <person name="La Scola B."/>
            <person name="Desnues C."/>
            <person name="Pagnier I."/>
            <person name="Robert C."/>
            <person name="Barrassi L."/>
            <person name="Fournous G."/>
            <person name="Merchat M."/>
            <person name="Suzan-Monti M."/>
            <person name="Forterre P."/>
            <person name="Koonin E."/>
            <person name="Raoult D."/>
        </authorList>
    </citation>
    <scope>NUCLEOTIDE SEQUENCE [GENOMIC DNA]</scope>
</reference>
<organismHost>
    <name type="scientific">Acanthamoeba polyphaga</name>
    <name type="common">Amoeba</name>
    <dbReference type="NCBI Taxonomy" id="5757"/>
</organismHost>
<dbReference type="EMBL" id="EU606015">
    <property type="protein sequence ID" value="ACF16993.1"/>
    <property type="molecule type" value="Genomic_DNA"/>
</dbReference>
<dbReference type="RefSeq" id="YP_002122370.1">
    <property type="nucleotide sequence ID" value="NC_011132.1"/>
</dbReference>
<dbReference type="GeneID" id="6760344"/>
<dbReference type="KEGG" id="vg:6760344"/>
<dbReference type="OrthoDB" id="28121at10239"/>
<dbReference type="Proteomes" id="UP000001863">
    <property type="component" value="Segment"/>
</dbReference>
<accession>B4YNE9</accession>
<feature type="chain" id="PRO_0000369817" description="Uncharacterized protein V9">
    <location>
        <begin position="1"/>
        <end position="175"/>
    </location>
</feature>
<organism>
    <name type="scientific">Sputnik virophage</name>
    <dbReference type="NCBI Taxonomy" id="543939"/>
    <lineage>
        <taxon>Viruses</taxon>
        <taxon>Varidnaviria</taxon>
        <taxon>Bamfordvirae</taxon>
        <taxon>Preplasmiviricota</taxon>
        <taxon>Maveriviricetes</taxon>
        <taxon>Priklausovirales</taxon>
        <taxon>Lavidaviridae</taxon>
        <taxon>Sputnikvirus</taxon>
        <taxon>Mimivirus-dependent virus Sputnik</taxon>
    </lineage>
</organism>
<sequence>MKELKYYEKVALSNFDILEMLDNKAEIVLYPNLIKYETIDDVLGPYGACVLLFEAKKNYGHWCCLFKREDNSIEFFNSYGGYPDNSLKYIPLHYREISNQYYPYLSLLLLKYPHKLYYNEFKFQKRANDIRTCGRWCVLRLLLKHLDIYEFKKYVDDMCSYYKVTPDELVTMITI</sequence>
<name>V9_SPTNK</name>
<proteinExistence type="predicted"/>
<keyword id="KW-1185">Reference proteome</keyword>
<protein>
    <recommendedName>
        <fullName>Uncharacterized protein V9</fullName>
    </recommendedName>
</protein>